<reference key="1">
    <citation type="submission" date="2005-07" db="EMBL/GenBank/DDBJ databases">
        <title>Complete sequence of Synechococcus sp. CC9605.</title>
        <authorList>
            <consortium name="US DOE Joint Genome Institute"/>
            <person name="Copeland A."/>
            <person name="Lucas S."/>
            <person name="Lapidus A."/>
            <person name="Barry K."/>
            <person name="Detter J.C."/>
            <person name="Glavina T."/>
            <person name="Hammon N."/>
            <person name="Israni S."/>
            <person name="Pitluck S."/>
            <person name="Schmutz J."/>
            <person name="Martinez M."/>
            <person name="Larimer F."/>
            <person name="Land M."/>
            <person name="Kyrpides N."/>
            <person name="Ivanova N."/>
            <person name="Richardson P."/>
        </authorList>
    </citation>
    <scope>NUCLEOTIDE SEQUENCE [LARGE SCALE GENOMIC DNA]</scope>
    <source>
        <strain>CC9605</strain>
    </source>
</reference>
<protein>
    <recommendedName>
        <fullName evidence="1">UPF0182 protein Syncc9605_1323</fullName>
    </recommendedName>
</protein>
<dbReference type="EMBL" id="CP000110">
    <property type="protein sequence ID" value="ABB35077.1"/>
    <property type="molecule type" value="Genomic_DNA"/>
</dbReference>
<dbReference type="RefSeq" id="WP_011364297.1">
    <property type="nucleotide sequence ID" value="NC_007516.1"/>
</dbReference>
<dbReference type="STRING" id="110662.Syncc9605_1323"/>
<dbReference type="KEGG" id="syd:Syncc9605_1323"/>
<dbReference type="eggNOG" id="COG1615">
    <property type="taxonomic scope" value="Bacteria"/>
</dbReference>
<dbReference type="HOGENOM" id="CLU_007733_0_0_3"/>
<dbReference type="OrthoDB" id="9763654at2"/>
<dbReference type="GO" id="GO:0005576">
    <property type="term" value="C:extracellular region"/>
    <property type="evidence" value="ECO:0007669"/>
    <property type="project" value="TreeGrafter"/>
</dbReference>
<dbReference type="GO" id="GO:0005886">
    <property type="term" value="C:plasma membrane"/>
    <property type="evidence" value="ECO:0007669"/>
    <property type="project" value="UniProtKB-SubCell"/>
</dbReference>
<dbReference type="HAMAP" id="MF_01600">
    <property type="entry name" value="UPF0182"/>
    <property type="match status" value="1"/>
</dbReference>
<dbReference type="InterPro" id="IPR005372">
    <property type="entry name" value="UPF0182"/>
</dbReference>
<dbReference type="PANTHER" id="PTHR39344">
    <property type="entry name" value="UPF0182 PROTEIN SLL1060"/>
    <property type="match status" value="1"/>
</dbReference>
<dbReference type="PANTHER" id="PTHR39344:SF1">
    <property type="entry name" value="UPF0182 PROTEIN SLL1060"/>
    <property type="match status" value="1"/>
</dbReference>
<dbReference type="Pfam" id="PF03699">
    <property type="entry name" value="UPF0182"/>
    <property type="match status" value="1"/>
</dbReference>
<proteinExistence type="inferred from homology"/>
<name>Y1323_SYNSC</name>
<sequence length="914" mass="102977">MRRLLLLLPLVVVAARMQIEWLWFNQFNLANVLLERWLLQVLLAGVAMLPLLAARAWSRQFRQQRLTSSQGISLRGWPYGIALLICAVVVLISALLTLDLLALAISDPFQLGDWQSNVWPHSRIGSVVKLVQVGGIGLAMTWLRLRPWLGRIVAASWVVVVSRTWGIWSLALWIPNESTKDPLLGADLSFGLGRFAGLHLALDLLLLGATFTLVFELWRVLASSQAISDWASPAFSPRQMRLIRLLSALLLFGAAGLVWLSRHQLLWTQHGLVAGAGWLQAHMTLPLRGFATLLLLLMGLALLLPCQRRLRQFLALALATLVMLETLATPLTRWLVVRPREFALQERYLKNAIEATQWGFQLDQIKSQVDDPSRFSPTDREEGASTLENVRIWDSGPLLEANRQLQQLRVYYRFSNAAVDRYPLNQDSDSSQQVIVSARELDQSALPRRSKTWQNRHFIFTHGYGFTVSPVNERRDDGLPSYFIKGLGTETKIAGNPALGIERSEVEKEIPVGDAALYYGMLPSPYAVAPTDIAEFDYPEGDINVMTHYQGSGGVPIGTWLQRCSAAVYLREPRLLFTNAINADSKLLIRRDVRSRVKAIAPFIDFRGEPYLISIPDAQQGSSNRINQNSNQRQQHQYWVVEGYTHSSTLAYSAAVSPDDSDRYLRNSVKAIVDAYNGSIRFFVSEPEDPIVNAWIRGFPDLFEPMQAMPLLVRDHRRVPEDFFNVQVNQLKRYHVDDPQIFYNGDDVWQVPSEIYGGQKINVEPYHITAQVQGNNNSEFLLLQPLTPLARPNLTAWLVARNDGDHYGELELIDFPKDKIILGPEQVQALIHQDPDVSEQFGLWDQDDLELVQGNLLVLPVGSGLLYVEPVYLRTRKVGLPSLARIVVSDGRLVAMDQDLNLALDQLMKKAPPV</sequence>
<evidence type="ECO:0000255" key="1">
    <source>
        <dbReference type="HAMAP-Rule" id="MF_01600"/>
    </source>
</evidence>
<accession>Q3AK05</accession>
<organism>
    <name type="scientific">Synechococcus sp. (strain CC9605)</name>
    <dbReference type="NCBI Taxonomy" id="110662"/>
    <lineage>
        <taxon>Bacteria</taxon>
        <taxon>Bacillati</taxon>
        <taxon>Cyanobacteriota</taxon>
        <taxon>Cyanophyceae</taxon>
        <taxon>Synechococcales</taxon>
        <taxon>Synechococcaceae</taxon>
        <taxon>Synechococcus</taxon>
    </lineage>
</organism>
<gene>
    <name type="ordered locus">Syncc9605_1323</name>
</gene>
<comment type="subcellular location">
    <subcellularLocation>
        <location evidence="1">Cell membrane</location>
        <topology evidence="1">Multi-pass membrane protein</topology>
    </subcellularLocation>
</comment>
<comment type="similarity">
    <text evidence="1">Belongs to the UPF0182 family.</text>
</comment>
<feature type="chain" id="PRO_0000291296" description="UPF0182 protein Syncc9605_1323">
    <location>
        <begin position="1"/>
        <end position="914"/>
    </location>
</feature>
<feature type="transmembrane region" description="Helical" evidence="1">
    <location>
        <begin position="4"/>
        <end position="24"/>
    </location>
</feature>
<feature type="transmembrane region" description="Helical" evidence="1">
    <location>
        <begin position="37"/>
        <end position="57"/>
    </location>
</feature>
<feature type="transmembrane region" description="Helical" evidence="1">
    <location>
        <begin position="81"/>
        <end position="101"/>
    </location>
</feature>
<feature type="transmembrane region" description="Helical" evidence="1">
    <location>
        <begin position="123"/>
        <end position="143"/>
    </location>
</feature>
<feature type="transmembrane region" description="Helical" evidence="1">
    <location>
        <begin position="152"/>
        <end position="172"/>
    </location>
</feature>
<feature type="transmembrane region" description="Helical" evidence="1">
    <location>
        <begin position="195"/>
        <end position="215"/>
    </location>
</feature>
<feature type="transmembrane region" description="Helical" evidence="1">
    <location>
        <begin position="240"/>
        <end position="260"/>
    </location>
</feature>
<feature type="transmembrane region" description="Helical" evidence="1">
    <location>
        <begin position="285"/>
        <end position="305"/>
    </location>
</feature>
<feature type="transmembrane region" description="Helical" evidence="1">
    <location>
        <begin position="312"/>
        <end position="332"/>
    </location>
</feature>
<keyword id="KW-1003">Cell membrane</keyword>
<keyword id="KW-0472">Membrane</keyword>
<keyword id="KW-0812">Transmembrane</keyword>
<keyword id="KW-1133">Transmembrane helix</keyword>